<organism>
    <name type="scientific">Equus caballus</name>
    <name type="common">Horse</name>
    <dbReference type="NCBI Taxonomy" id="9796"/>
    <lineage>
        <taxon>Eukaryota</taxon>
        <taxon>Metazoa</taxon>
        <taxon>Chordata</taxon>
        <taxon>Craniata</taxon>
        <taxon>Vertebrata</taxon>
        <taxon>Euteleostomi</taxon>
        <taxon>Mammalia</taxon>
        <taxon>Eutheria</taxon>
        <taxon>Laurasiatheria</taxon>
        <taxon>Perissodactyla</taxon>
        <taxon>Equidae</taxon>
        <taxon>Equus</taxon>
    </lineage>
</organism>
<keyword id="KW-0968">Cytoplasmic vesicle</keyword>
<keyword id="KW-1015">Disulfide bond</keyword>
<keyword id="KW-0325">Glycoprotein</keyword>
<keyword id="KW-0391">Immunity</keyword>
<keyword id="KW-0395">Inflammatory response</keyword>
<keyword id="KW-0399">Innate immunity</keyword>
<keyword id="KW-1017">Isopeptide bond</keyword>
<keyword id="KW-0433">Leucine-rich repeat</keyword>
<keyword id="KW-0472">Membrane</keyword>
<keyword id="KW-0520">NAD</keyword>
<keyword id="KW-0675">Receptor</keyword>
<keyword id="KW-1185">Reference proteome</keyword>
<keyword id="KW-0677">Repeat</keyword>
<keyword id="KW-0732">Signal</keyword>
<keyword id="KW-0812">Transmembrane</keyword>
<keyword id="KW-1133">Transmembrane helix</keyword>
<keyword id="KW-0832">Ubl conjugation</keyword>
<name>TLR2_HORSE</name>
<reference key="1">
    <citation type="submission" date="2003-10" db="EMBL/GenBank/DDBJ databases">
        <title>Cloning and sequencing of equine toll-like receptor 2 (TLR2).</title>
        <authorList>
            <person name="Vandenplas M.L."/>
            <person name="McNeill B.W."/>
            <person name="Cordonnier-Pratt M.-M."/>
            <person name="Pratt L.H."/>
            <person name="Moore J.N."/>
        </authorList>
    </citation>
    <scope>NUCLEOTIDE SEQUENCE [MRNA]</scope>
</reference>
<proteinExistence type="evidence at transcript level"/>
<evidence type="ECO:0000250" key="1"/>
<evidence type="ECO:0000250" key="2">
    <source>
        <dbReference type="UniProtKB" id="O00206"/>
    </source>
</evidence>
<evidence type="ECO:0000250" key="3">
    <source>
        <dbReference type="UniProtKB" id="O60603"/>
    </source>
</evidence>
<evidence type="ECO:0000250" key="4">
    <source>
        <dbReference type="UniProtKB" id="Q9QUN7"/>
    </source>
</evidence>
<evidence type="ECO:0000255" key="5"/>
<evidence type="ECO:0000255" key="6">
    <source>
        <dbReference type="PROSITE-ProRule" id="PRU00204"/>
    </source>
</evidence>
<evidence type="ECO:0000305" key="7"/>
<protein>
    <recommendedName>
        <fullName>Toll-like receptor 2</fullName>
    </recommendedName>
    <cdAntigenName>CD282</cdAntigenName>
</protein>
<feature type="signal peptide" evidence="5">
    <location>
        <begin position="1"/>
        <end position="20"/>
    </location>
</feature>
<feature type="chain" id="PRO_0000363773" description="Toll-like receptor 2">
    <location>
        <begin position="21"/>
        <end position="784"/>
    </location>
</feature>
<feature type="topological domain" description="Extracellular" evidence="5">
    <location>
        <begin position="21"/>
        <end position="587"/>
    </location>
</feature>
<feature type="transmembrane region" description="Helical" evidence="5">
    <location>
        <begin position="588"/>
        <end position="608"/>
    </location>
</feature>
<feature type="topological domain" description="Cytoplasmic" evidence="5">
    <location>
        <begin position="609"/>
        <end position="784"/>
    </location>
</feature>
<feature type="repeat" description="LRR 1">
    <location>
        <begin position="54"/>
        <end position="77"/>
    </location>
</feature>
<feature type="repeat" description="LRR 2">
    <location>
        <begin position="78"/>
        <end position="101"/>
    </location>
</feature>
<feature type="repeat" description="LRR 3">
    <location>
        <begin position="102"/>
        <end position="125"/>
    </location>
</feature>
<feature type="repeat" description="LRR 4">
    <location>
        <begin position="126"/>
        <end position="150"/>
    </location>
</feature>
<feature type="repeat" description="LRR 5">
    <location>
        <begin position="151"/>
        <end position="175"/>
    </location>
</feature>
<feature type="repeat" description="LRR 6">
    <location>
        <begin position="176"/>
        <end position="199"/>
    </location>
</feature>
<feature type="repeat" description="LRR 7">
    <location>
        <begin position="200"/>
        <end position="223"/>
    </location>
</feature>
<feature type="repeat" description="LRR 8">
    <location>
        <begin position="224"/>
        <end position="250"/>
    </location>
</feature>
<feature type="repeat" description="LRR 9">
    <location>
        <begin position="251"/>
        <end position="278"/>
    </location>
</feature>
<feature type="repeat" description="LRR 10">
    <location>
        <begin position="279"/>
        <end position="308"/>
    </location>
</feature>
<feature type="repeat" description="LRR 11">
    <location>
        <begin position="309"/>
        <end position="337"/>
    </location>
</feature>
<feature type="repeat" description="LRR 12">
    <location>
        <begin position="338"/>
        <end position="361"/>
    </location>
</feature>
<feature type="repeat" description="LRR 13">
    <location>
        <begin position="362"/>
        <end position="388"/>
    </location>
</feature>
<feature type="repeat" description="LRR 14">
    <location>
        <begin position="389"/>
        <end position="414"/>
    </location>
</feature>
<feature type="repeat" description="LRR 15">
    <location>
        <begin position="415"/>
        <end position="437"/>
    </location>
</feature>
<feature type="repeat" description="LRR 16">
    <location>
        <begin position="438"/>
        <end position="457"/>
    </location>
</feature>
<feature type="repeat" description="LRR 17">
    <location>
        <begin position="458"/>
        <end position="478"/>
    </location>
</feature>
<feature type="repeat" description="LRR 18">
    <location>
        <begin position="479"/>
        <end position="500"/>
    </location>
</feature>
<feature type="repeat" description="LRR 19">
    <location>
        <begin position="501"/>
        <end position="524"/>
    </location>
</feature>
<feature type="domain" description="LRRCT">
    <location>
        <begin position="525"/>
        <end position="579"/>
    </location>
</feature>
<feature type="domain" description="TIR" evidence="6">
    <location>
        <begin position="639"/>
        <end position="782"/>
    </location>
</feature>
<feature type="short sequence motif" description="ATG16L1-binding motif">
    <location>
        <begin position="761"/>
        <end position="778"/>
    </location>
</feature>
<feature type="site" description="Interaction with bacterial lipopeptide" evidence="1">
    <location>
        <position position="349"/>
    </location>
</feature>
<feature type="glycosylation site" description="N-linked (GlcNAc...) asparagine" evidence="5">
    <location>
        <position position="115"/>
    </location>
</feature>
<feature type="glycosylation site" description="N-linked (GlcNAc...) asparagine" evidence="5">
    <location>
        <position position="199"/>
    </location>
</feature>
<feature type="glycosylation site" description="N-linked (GlcNAc...) asparagine" evidence="5">
    <location>
        <position position="414"/>
    </location>
</feature>
<feature type="glycosylation site" description="N-linked (GlcNAc...) asparagine" evidence="5">
    <location>
        <position position="442"/>
    </location>
</feature>
<feature type="disulfide bond" evidence="1">
    <location>
        <begin position="31"/>
        <end position="37"/>
    </location>
</feature>
<feature type="disulfide bond" evidence="1">
    <location>
        <begin position="353"/>
        <end position="382"/>
    </location>
</feature>
<feature type="disulfide bond" evidence="1">
    <location>
        <begin position="432"/>
        <end position="454"/>
    </location>
</feature>
<feature type="cross-link" description="Glycyl lysine isopeptide (Lys-Gly) (interchain with G-Cter in ubiquitin)" evidence="3">
    <location>
        <position position="754"/>
    </location>
</feature>
<comment type="function">
    <text evidence="3 4">Cooperates with LY96 to mediate the innate immune response to bacterial lipoproteins and other microbial cell wall components. Cooperates with TLR1 or TLR6 to mediate the innate immune response to bacterial lipoproteins or lipopeptides. Acts via MYD88 and TRAF6, leading to NF-kappa-B activation, cytokine secretion and the inflammatory response (By similarity). May also promote apoptosis in response to lipoproteins. Forms activation clusters composed of several receptors depending on the ligand, these clusters trigger signaling from the cell surface and subsequently are targeted to the Golgi in a lipid-raft dependent pathway. Forms the cluster TLR2:TLR6:CD14:CD36 in response to diacylated lipopeptides and TLR2:TLR1:CD14 in response to triacylated lipopeptides (By similarity).</text>
</comment>
<comment type="subunit">
    <text evidence="3 4">Interacts with LY96, TLR1 and TLR6 (via extracellular domain). TLR2 seems to exist in heterodimers with either TLR1 or TLR6 before stimulation by the ligand. The heterodimers form bigger oligomers in response to their corresponding ligands as well as further heterotypic associations with other receptors such as CD14 and/or CD36. Binds MYD88 (via TIR domain). Interacts with TICAM1. Interacts with CNPY3. Interacts with ATG16L1. Interacts with PPP1R11. Interacts with TICAM2. Interacts with TIRAP (By similarity).</text>
</comment>
<comment type="subcellular location">
    <subcellularLocation>
        <location evidence="4">Membrane</location>
        <topology evidence="5">Single-pass type I membrane protein</topology>
    </subcellularLocation>
    <subcellularLocation>
        <location evidence="4">Cytoplasmic vesicle</location>
        <location evidence="4">Phagosome membrane</location>
        <topology evidence="5">Single-pass type I membrane protein</topology>
    </subcellularLocation>
    <subcellularLocation>
        <location evidence="3">Membrane raft</location>
    </subcellularLocation>
    <text evidence="3">Does not reside in lipid rafts before stimulation but accumulates increasingly in the raft upon the presence of the microbial ligand. In response to diacylated lipoproteins, TLR2:TLR6 heterodimers are recruited in lipid rafts, this recruitment determine the intracellular targeting to the Golgi apparatus. Triacylated lipoproteins induce the same mechanism for TLR2:TLR1 heterodimers.</text>
</comment>
<comment type="domain">
    <text evidence="1">Ester-bound lipid substrates are bound through a crevice formed between the LRR 11 and LRR 12.</text>
</comment>
<comment type="domain">
    <text evidence="1">The ATG16L1-binding motif mediates interaction with ATG16L1.</text>
</comment>
<comment type="PTM">
    <text evidence="4">Ubiquitinated at Lys-754 by PPP1R11, leading to its degradation. Deubiquitinated by USP2.</text>
</comment>
<comment type="PTM">
    <text evidence="3">Glycosylation of Asn-442 is critical for secretion of the N-terminal ectodomain of TLR2.</text>
</comment>
<comment type="similarity">
    <text evidence="7">Belongs to the Toll-like receptor family.</text>
</comment>
<comment type="caution">
    <text evidence="2 7">In some plant proteins and in human SARM1, the TIR domain has NAD(+) hydrolase (NADase) activity (By similarity). However, despite the presence of the catalytic Asp residue, the isolated TIR domain of human TLR4 lacks NADase activity (By similarity). Based on this, it is unlikely that Toll-like receptors have NADase activity.</text>
</comment>
<gene>
    <name type="primary">TLR2</name>
</gene>
<sequence length="784" mass="90164">MPHALWTVWVLGAVISLSKEGVPDQPSSLSCDPTGVCDGRSRSLNSIPSGLTAAVKSLDLSNNKIASVGNSDLWKCVNLKALRLGSNDINTIEEDSFSSLRSLEHLDLSNNHLSNLSSSWFRPLSSLKFLNLLGSTYKTLGETSLFSHLTNLRILKVGNIHFTEIQGKDFAGLTFLEELEIDATNLQRYEPKSFKSIQNISHLILRMKQPVLLPEIILDTLSSLEYLELRDTYLNTFHFAEVSDPETNTLIKKFTFRNVKITDESFDEIVKLLNYISGVSEAEFDECTLDGLGEFRTPDIDKIKVIGKLETLTIRRLRIPQFYLFRDLSSIYSLTERVKRITIENSKVFLVPCSLSRHLKSLEYLDLSDNLMVEEYLKNSACERAWPSLQTLILRQNHLTSLGKTGETLLTLKNLTKLDISKNSFHSMPETCQWPEKMKYLNLSSIRIDRLTQCIPQTLEVLDISNNNLNSFSLILPQVKELYISRNKLKTLPDASFLPMLLVMRISRKTINTFSKEQLDSFQKLKTLEAGGNNFICSCEFLSFTQEEQALDQILIDWPENYLCDSPSHVRGQRVQDTHLSVSECHRTALVSAVCCALFLSILLTGVLCHHFHGLWYMKMMWAWLQAKRKPRTAPQRDICYDAFVSYSERDSYWVENLMVQELEHFNPPFKLCLHKRDFIPGKWIIDNIIDSIEKSHKTIFVLSENFVKSEWCKYELDFSHFRLFDENNDAAILILLEPIDKKAIPQRFCKLRKIMNTKTYLEWPTDEAQQEGFWLNLRAAIKS</sequence>
<dbReference type="EMBL" id="AY429602">
    <property type="protein sequence ID" value="AAR08196.1"/>
    <property type="molecule type" value="mRNA"/>
</dbReference>
<dbReference type="RefSeq" id="NP_001075265.1">
    <property type="nucleotide sequence ID" value="NM_001081796.1"/>
</dbReference>
<dbReference type="SMR" id="Q6T752"/>
<dbReference type="FunCoup" id="Q6T752">
    <property type="interactions" value="354"/>
</dbReference>
<dbReference type="STRING" id="9796.ENSECAP00000015544"/>
<dbReference type="GlyCosmos" id="Q6T752">
    <property type="glycosylation" value="4 sites, No reported glycans"/>
</dbReference>
<dbReference type="PaxDb" id="9796-ENSECAP00000015544"/>
<dbReference type="GeneID" id="100009701"/>
<dbReference type="KEGG" id="ecb:100009701"/>
<dbReference type="CTD" id="7097"/>
<dbReference type="InParanoid" id="Q6T752"/>
<dbReference type="OrthoDB" id="1081807at2759"/>
<dbReference type="Proteomes" id="UP000002281">
    <property type="component" value="Unplaced"/>
</dbReference>
<dbReference type="GO" id="GO:0005794">
    <property type="term" value="C:Golgi apparatus"/>
    <property type="evidence" value="ECO:0000250"/>
    <property type="project" value="UniProtKB"/>
</dbReference>
<dbReference type="GO" id="GO:0045121">
    <property type="term" value="C:membrane raft"/>
    <property type="evidence" value="ECO:0000250"/>
    <property type="project" value="UniProtKB"/>
</dbReference>
<dbReference type="GO" id="GO:0030670">
    <property type="term" value="C:phagocytic vesicle membrane"/>
    <property type="evidence" value="ECO:0007669"/>
    <property type="project" value="UniProtKB-SubCell"/>
</dbReference>
<dbReference type="GO" id="GO:0005886">
    <property type="term" value="C:plasma membrane"/>
    <property type="evidence" value="ECO:0000318"/>
    <property type="project" value="GO_Central"/>
</dbReference>
<dbReference type="GO" id="GO:0043235">
    <property type="term" value="C:receptor complex"/>
    <property type="evidence" value="ECO:0000318"/>
    <property type="project" value="GO_Central"/>
</dbReference>
<dbReference type="GO" id="GO:0061809">
    <property type="term" value="F:NAD+ nucleosidase activity, cyclic ADP-ribose generating"/>
    <property type="evidence" value="ECO:0007669"/>
    <property type="project" value="UniProtKB-EC"/>
</dbReference>
<dbReference type="GO" id="GO:0038023">
    <property type="term" value="F:signaling receptor activity"/>
    <property type="evidence" value="ECO:0000318"/>
    <property type="project" value="GO_Central"/>
</dbReference>
<dbReference type="GO" id="GO:0004888">
    <property type="term" value="F:transmembrane signaling receptor activity"/>
    <property type="evidence" value="ECO:0007669"/>
    <property type="project" value="InterPro"/>
</dbReference>
<dbReference type="GO" id="GO:0042497">
    <property type="term" value="F:triacyl lipopeptide binding"/>
    <property type="evidence" value="ECO:0000318"/>
    <property type="project" value="GO_Central"/>
</dbReference>
<dbReference type="GO" id="GO:0071726">
    <property type="term" value="P:cellular response to diacyl bacterial lipopeptide"/>
    <property type="evidence" value="ECO:0000250"/>
    <property type="project" value="UniProtKB"/>
</dbReference>
<dbReference type="GO" id="GO:0071727">
    <property type="term" value="P:cellular response to triacyl bacterial lipopeptide"/>
    <property type="evidence" value="ECO:0000250"/>
    <property type="project" value="UniProtKB"/>
</dbReference>
<dbReference type="GO" id="GO:0006954">
    <property type="term" value="P:inflammatory response"/>
    <property type="evidence" value="ECO:0000318"/>
    <property type="project" value="GO_Central"/>
</dbReference>
<dbReference type="GO" id="GO:0045087">
    <property type="term" value="P:innate immune response"/>
    <property type="evidence" value="ECO:0007669"/>
    <property type="project" value="UniProtKB-KW"/>
</dbReference>
<dbReference type="GO" id="GO:0002224">
    <property type="term" value="P:toll-like receptor signaling pathway"/>
    <property type="evidence" value="ECO:0000318"/>
    <property type="project" value="GO_Central"/>
</dbReference>
<dbReference type="FunFam" id="3.40.50.10140:FF:000001">
    <property type="entry name" value="Toll-like receptor 2"/>
    <property type="match status" value="1"/>
</dbReference>
<dbReference type="FunFam" id="3.80.10.10:FF:000046">
    <property type="entry name" value="Toll-like receptor 2"/>
    <property type="match status" value="1"/>
</dbReference>
<dbReference type="Gene3D" id="3.80.10.10">
    <property type="entry name" value="Ribonuclease Inhibitor"/>
    <property type="match status" value="1"/>
</dbReference>
<dbReference type="Gene3D" id="3.40.50.10140">
    <property type="entry name" value="Toll/interleukin-1 receptor homology (TIR) domain"/>
    <property type="match status" value="1"/>
</dbReference>
<dbReference type="InterPro" id="IPR000483">
    <property type="entry name" value="Cys-rich_flank_reg_C"/>
</dbReference>
<dbReference type="InterPro" id="IPR001611">
    <property type="entry name" value="Leu-rich_rpt"/>
</dbReference>
<dbReference type="InterPro" id="IPR003591">
    <property type="entry name" value="Leu-rich_rpt_typical-subtyp"/>
</dbReference>
<dbReference type="InterPro" id="IPR026906">
    <property type="entry name" value="LRR_5"/>
</dbReference>
<dbReference type="InterPro" id="IPR032675">
    <property type="entry name" value="LRR_dom_sf"/>
</dbReference>
<dbReference type="InterPro" id="IPR000157">
    <property type="entry name" value="TIR_dom"/>
</dbReference>
<dbReference type="InterPro" id="IPR017241">
    <property type="entry name" value="Toll-like_receptor"/>
</dbReference>
<dbReference type="InterPro" id="IPR035897">
    <property type="entry name" value="Toll_tir_struct_dom_sf"/>
</dbReference>
<dbReference type="PANTHER" id="PTHR24365">
    <property type="entry name" value="TOLL-LIKE RECEPTOR"/>
    <property type="match status" value="1"/>
</dbReference>
<dbReference type="PANTHER" id="PTHR24365:SF17">
    <property type="entry name" value="TOLL-LIKE RECEPTOR 2"/>
    <property type="match status" value="1"/>
</dbReference>
<dbReference type="Pfam" id="PF13306">
    <property type="entry name" value="LRR_5"/>
    <property type="match status" value="1"/>
</dbReference>
<dbReference type="Pfam" id="PF13855">
    <property type="entry name" value="LRR_8"/>
    <property type="match status" value="2"/>
</dbReference>
<dbReference type="Pfam" id="PF01463">
    <property type="entry name" value="LRRCT"/>
    <property type="match status" value="1"/>
</dbReference>
<dbReference type="Pfam" id="PF01582">
    <property type="entry name" value="TIR"/>
    <property type="match status" value="1"/>
</dbReference>
<dbReference type="PIRSF" id="PIRSF037595">
    <property type="entry name" value="Toll-like_receptor"/>
    <property type="match status" value="1"/>
</dbReference>
<dbReference type="PRINTS" id="PR01537">
    <property type="entry name" value="INTRLKN1R1F"/>
</dbReference>
<dbReference type="PRINTS" id="PR00019">
    <property type="entry name" value="LEURICHRPT"/>
</dbReference>
<dbReference type="SMART" id="SM00364">
    <property type="entry name" value="LRR_BAC"/>
    <property type="match status" value="5"/>
</dbReference>
<dbReference type="SMART" id="SM00369">
    <property type="entry name" value="LRR_TYP"/>
    <property type="match status" value="8"/>
</dbReference>
<dbReference type="SMART" id="SM00082">
    <property type="entry name" value="LRRCT"/>
    <property type="match status" value="1"/>
</dbReference>
<dbReference type="SMART" id="SM00255">
    <property type="entry name" value="TIR"/>
    <property type="match status" value="1"/>
</dbReference>
<dbReference type="SUPFAM" id="SSF52058">
    <property type="entry name" value="L domain-like"/>
    <property type="match status" value="2"/>
</dbReference>
<dbReference type="SUPFAM" id="SSF52200">
    <property type="entry name" value="Toll/Interleukin receptor TIR domain"/>
    <property type="match status" value="1"/>
</dbReference>
<dbReference type="PROSITE" id="PS51450">
    <property type="entry name" value="LRR"/>
    <property type="match status" value="9"/>
</dbReference>
<dbReference type="PROSITE" id="PS50104">
    <property type="entry name" value="TIR"/>
    <property type="match status" value="1"/>
</dbReference>
<accession>Q6T752</accession>